<keyword id="KW-0342">GTP-binding</keyword>
<keyword id="KW-0547">Nucleotide-binding</keyword>
<keyword id="KW-0677">Repeat</keyword>
<keyword id="KW-0690">Ribosome biogenesis</keyword>
<name>DER_TREPS</name>
<comment type="function">
    <text evidence="1">GTPase that plays an essential role in the late steps of ribosome biogenesis.</text>
</comment>
<comment type="subunit">
    <text evidence="1">Associates with the 50S ribosomal subunit.</text>
</comment>
<comment type="similarity">
    <text evidence="1">Belongs to the TRAFAC class TrmE-Era-EngA-EngB-Septin-like GTPase superfamily. EngA (Der) GTPase family.</text>
</comment>
<proteinExistence type="inferred from homology"/>
<gene>
    <name evidence="1" type="primary">der</name>
    <name type="synonym">engA</name>
    <name type="ordered locus">TPASS_0689</name>
</gene>
<evidence type="ECO:0000255" key="1">
    <source>
        <dbReference type="HAMAP-Rule" id="MF_00195"/>
    </source>
</evidence>
<accession>B2S3S8</accession>
<dbReference type="EMBL" id="CP000805">
    <property type="protein sequence ID" value="ACD71107.1"/>
    <property type="molecule type" value="Genomic_DNA"/>
</dbReference>
<dbReference type="RefSeq" id="WP_010882134.1">
    <property type="nucleotide sequence ID" value="NC_021508.1"/>
</dbReference>
<dbReference type="SMR" id="B2S3S8"/>
<dbReference type="GeneID" id="93876458"/>
<dbReference type="KEGG" id="tpp:TPASS_0689"/>
<dbReference type="PATRIC" id="fig|455434.6.peg.682"/>
<dbReference type="Proteomes" id="UP000001202">
    <property type="component" value="Chromosome"/>
</dbReference>
<dbReference type="GO" id="GO:0005525">
    <property type="term" value="F:GTP binding"/>
    <property type="evidence" value="ECO:0007669"/>
    <property type="project" value="UniProtKB-UniRule"/>
</dbReference>
<dbReference type="GO" id="GO:0042254">
    <property type="term" value="P:ribosome biogenesis"/>
    <property type="evidence" value="ECO:0007669"/>
    <property type="project" value="UniProtKB-KW"/>
</dbReference>
<dbReference type="CDD" id="cd01894">
    <property type="entry name" value="EngA1"/>
    <property type="match status" value="1"/>
</dbReference>
<dbReference type="CDD" id="cd01895">
    <property type="entry name" value="EngA2"/>
    <property type="match status" value="1"/>
</dbReference>
<dbReference type="Gene3D" id="3.30.300.20">
    <property type="match status" value="1"/>
</dbReference>
<dbReference type="Gene3D" id="3.40.50.300">
    <property type="entry name" value="P-loop containing nucleotide triphosphate hydrolases"/>
    <property type="match status" value="2"/>
</dbReference>
<dbReference type="HAMAP" id="MF_00195">
    <property type="entry name" value="GTPase_Der"/>
    <property type="match status" value="1"/>
</dbReference>
<dbReference type="InterPro" id="IPR031166">
    <property type="entry name" value="G_ENGA"/>
</dbReference>
<dbReference type="InterPro" id="IPR006073">
    <property type="entry name" value="GTP-bd"/>
</dbReference>
<dbReference type="InterPro" id="IPR016484">
    <property type="entry name" value="GTPase_Der"/>
</dbReference>
<dbReference type="InterPro" id="IPR032859">
    <property type="entry name" value="KH_dom-like"/>
</dbReference>
<dbReference type="InterPro" id="IPR015946">
    <property type="entry name" value="KH_dom-like_a/b"/>
</dbReference>
<dbReference type="InterPro" id="IPR027417">
    <property type="entry name" value="P-loop_NTPase"/>
</dbReference>
<dbReference type="InterPro" id="IPR005225">
    <property type="entry name" value="Small_GTP-bd"/>
</dbReference>
<dbReference type="NCBIfam" id="TIGR03594">
    <property type="entry name" value="GTPase_EngA"/>
    <property type="match status" value="1"/>
</dbReference>
<dbReference type="NCBIfam" id="TIGR00231">
    <property type="entry name" value="small_GTP"/>
    <property type="match status" value="2"/>
</dbReference>
<dbReference type="PANTHER" id="PTHR43834">
    <property type="entry name" value="GTPASE DER"/>
    <property type="match status" value="1"/>
</dbReference>
<dbReference type="PANTHER" id="PTHR43834:SF6">
    <property type="entry name" value="GTPASE DER"/>
    <property type="match status" value="1"/>
</dbReference>
<dbReference type="Pfam" id="PF14714">
    <property type="entry name" value="KH_dom-like"/>
    <property type="match status" value="1"/>
</dbReference>
<dbReference type="Pfam" id="PF01926">
    <property type="entry name" value="MMR_HSR1"/>
    <property type="match status" value="2"/>
</dbReference>
<dbReference type="PIRSF" id="PIRSF006485">
    <property type="entry name" value="GTP-binding_EngA"/>
    <property type="match status" value="1"/>
</dbReference>
<dbReference type="PRINTS" id="PR00326">
    <property type="entry name" value="GTP1OBG"/>
</dbReference>
<dbReference type="SUPFAM" id="SSF52540">
    <property type="entry name" value="P-loop containing nucleoside triphosphate hydrolases"/>
    <property type="match status" value="2"/>
</dbReference>
<dbReference type="PROSITE" id="PS51712">
    <property type="entry name" value="G_ENGA"/>
    <property type="match status" value="2"/>
</dbReference>
<sequence>MKGQDVILCDGGRHFSYKVLPRVVIVGRPNVGKSTLFNRLLGRRRSITSNTSGVTRDSIEETVILRGFPLRLVDTSGFTVFSEKKASRQHIDTLVLEQTYKSIQCADKILLVLDGTCESAEDEEVIQYLRPYWGKLIAAVNKTEGGEEVHYNYARYGFSTLICVSAEHGRNIDALERAIIQNLFSVDERRELPKDDVVRLAIVGKPNTGKSTLMNYLMRRTVSLVCDRAGTTRDVVTGHVEFKQYKFIIADTAGIRKRQKVYESIEYYSVIRAISILNAVDIVLYIVDARDGFSEQDKKIVSQISKRNLGVIFLLNKWDLLEGSTSLIAKKKRDVRTAFGKMNFVPVVPVSAKTGHGISDALHCVCKIFAQLNTKVETSALNTALKDWVTSYPPPRKYGHVSLKYLVQVSVRPIEFLLFANRPDRIPENYVRFLQNRIREDLGLDSIPVKLTIRKNCRKR</sequence>
<reference key="1">
    <citation type="journal article" date="2008" name="BMC Microbiol.">
        <title>Complete genome sequence of Treponema pallidum ssp. pallidum strain SS14 determined with oligonucleotide arrays.</title>
        <authorList>
            <person name="Matejkova P."/>
            <person name="Strouhal M."/>
            <person name="Smajs D."/>
            <person name="Norris S.J."/>
            <person name="Palzkill T."/>
            <person name="Petrosino J.F."/>
            <person name="Sodergren E."/>
            <person name="Norton J.E."/>
            <person name="Singh J."/>
            <person name="Richmond T.A."/>
            <person name="Molla M.N."/>
            <person name="Albert T.J."/>
            <person name="Weinstock G.M."/>
        </authorList>
    </citation>
    <scope>NUCLEOTIDE SEQUENCE [LARGE SCALE GENOMIC DNA]</scope>
    <source>
        <strain>SS14</strain>
    </source>
</reference>
<feature type="chain" id="PRO_1000099176" description="GTPase Der">
    <location>
        <begin position="1"/>
        <end position="460"/>
    </location>
</feature>
<feature type="domain" description="EngA-type G 1">
    <location>
        <begin position="21"/>
        <end position="187"/>
    </location>
</feature>
<feature type="domain" description="EngA-type G 2">
    <location>
        <begin position="198"/>
        <end position="373"/>
    </location>
</feature>
<feature type="domain" description="KH-like" evidence="1">
    <location>
        <begin position="374"/>
        <end position="457"/>
    </location>
</feature>
<feature type="binding site" evidence="1">
    <location>
        <begin position="27"/>
        <end position="34"/>
    </location>
    <ligand>
        <name>GTP</name>
        <dbReference type="ChEBI" id="CHEBI:37565"/>
        <label>1</label>
    </ligand>
</feature>
<feature type="binding site" evidence="1">
    <location>
        <begin position="74"/>
        <end position="78"/>
    </location>
    <ligand>
        <name>GTP</name>
        <dbReference type="ChEBI" id="CHEBI:37565"/>
        <label>1</label>
    </ligand>
</feature>
<feature type="binding site" evidence="1">
    <location>
        <begin position="141"/>
        <end position="144"/>
    </location>
    <ligand>
        <name>GTP</name>
        <dbReference type="ChEBI" id="CHEBI:37565"/>
        <label>1</label>
    </ligand>
</feature>
<feature type="binding site" evidence="1">
    <location>
        <begin position="204"/>
        <end position="211"/>
    </location>
    <ligand>
        <name>GTP</name>
        <dbReference type="ChEBI" id="CHEBI:37565"/>
        <label>2</label>
    </ligand>
</feature>
<feature type="binding site" evidence="1">
    <location>
        <begin position="251"/>
        <end position="255"/>
    </location>
    <ligand>
        <name>GTP</name>
        <dbReference type="ChEBI" id="CHEBI:37565"/>
        <label>2</label>
    </ligand>
</feature>
<feature type="binding site" evidence="1">
    <location>
        <begin position="316"/>
        <end position="319"/>
    </location>
    <ligand>
        <name>GTP</name>
        <dbReference type="ChEBI" id="CHEBI:37565"/>
        <label>2</label>
    </ligand>
</feature>
<organism>
    <name type="scientific">Treponema pallidum subsp. pallidum (strain SS14)</name>
    <dbReference type="NCBI Taxonomy" id="455434"/>
    <lineage>
        <taxon>Bacteria</taxon>
        <taxon>Pseudomonadati</taxon>
        <taxon>Spirochaetota</taxon>
        <taxon>Spirochaetia</taxon>
        <taxon>Spirochaetales</taxon>
        <taxon>Treponemataceae</taxon>
        <taxon>Treponema</taxon>
    </lineage>
</organism>
<protein>
    <recommendedName>
        <fullName evidence="1">GTPase Der</fullName>
    </recommendedName>
    <alternativeName>
        <fullName evidence="1">GTP-binding protein EngA</fullName>
    </alternativeName>
</protein>